<keyword id="KW-0342">GTP-binding</keyword>
<keyword id="KW-0547">Nucleotide-binding</keyword>
<keyword id="KW-0677">Repeat</keyword>
<keyword id="KW-0690">Ribosome biogenesis</keyword>
<gene>
    <name evidence="1" type="primary">der</name>
    <name type="synonym">engA</name>
    <name type="ordered locus">Tpet_1348</name>
</gene>
<name>DER_THEP1</name>
<reference key="1">
    <citation type="submission" date="2007-05" db="EMBL/GenBank/DDBJ databases">
        <title>Complete sequence of Thermotoga petrophila RKU-1.</title>
        <authorList>
            <consortium name="US DOE Joint Genome Institute"/>
            <person name="Copeland A."/>
            <person name="Lucas S."/>
            <person name="Lapidus A."/>
            <person name="Barry K."/>
            <person name="Glavina del Rio T."/>
            <person name="Dalin E."/>
            <person name="Tice H."/>
            <person name="Pitluck S."/>
            <person name="Sims D."/>
            <person name="Brettin T."/>
            <person name="Bruce D."/>
            <person name="Detter J.C."/>
            <person name="Han C."/>
            <person name="Tapia R."/>
            <person name="Schmutz J."/>
            <person name="Larimer F."/>
            <person name="Land M."/>
            <person name="Hauser L."/>
            <person name="Kyrpides N."/>
            <person name="Mikhailova N."/>
            <person name="Nelson K."/>
            <person name="Gogarten J.P."/>
            <person name="Noll K."/>
            <person name="Richardson P."/>
        </authorList>
    </citation>
    <scope>NUCLEOTIDE SEQUENCE [LARGE SCALE GENOMIC DNA]</scope>
    <source>
        <strain>ATCC BAA-488 / DSM 13995 / JCM 10881 / RKU-1</strain>
    </source>
</reference>
<organism>
    <name type="scientific">Thermotoga petrophila (strain ATCC BAA-488 / DSM 13995 / JCM 10881 / RKU-1)</name>
    <dbReference type="NCBI Taxonomy" id="390874"/>
    <lineage>
        <taxon>Bacteria</taxon>
        <taxon>Thermotogati</taxon>
        <taxon>Thermotogota</taxon>
        <taxon>Thermotogae</taxon>
        <taxon>Thermotogales</taxon>
        <taxon>Thermotogaceae</taxon>
        <taxon>Thermotoga</taxon>
    </lineage>
</organism>
<evidence type="ECO:0000255" key="1">
    <source>
        <dbReference type="HAMAP-Rule" id="MF_00195"/>
    </source>
</evidence>
<feature type="chain" id="PRO_1000011775" description="GTPase Der">
    <location>
        <begin position="1"/>
        <end position="439"/>
    </location>
</feature>
<feature type="domain" description="EngA-type G 1">
    <location>
        <begin position="2"/>
        <end position="168"/>
    </location>
</feature>
<feature type="domain" description="EngA-type G 2">
    <location>
        <begin position="181"/>
        <end position="357"/>
    </location>
</feature>
<feature type="domain" description="KH-like" evidence="1">
    <location>
        <begin position="358"/>
        <end position="439"/>
    </location>
</feature>
<feature type="binding site" evidence="1">
    <location>
        <begin position="8"/>
        <end position="15"/>
    </location>
    <ligand>
        <name>GTP</name>
        <dbReference type="ChEBI" id="CHEBI:37565"/>
        <label>1</label>
    </ligand>
</feature>
<feature type="binding site" evidence="1">
    <location>
        <begin position="55"/>
        <end position="59"/>
    </location>
    <ligand>
        <name>GTP</name>
        <dbReference type="ChEBI" id="CHEBI:37565"/>
        <label>1</label>
    </ligand>
</feature>
<feature type="binding site" evidence="1">
    <location>
        <begin position="118"/>
        <end position="121"/>
    </location>
    <ligand>
        <name>GTP</name>
        <dbReference type="ChEBI" id="CHEBI:37565"/>
        <label>1</label>
    </ligand>
</feature>
<feature type="binding site" evidence="1">
    <location>
        <begin position="187"/>
        <end position="194"/>
    </location>
    <ligand>
        <name>GTP</name>
        <dbReference type="ChEBI" id="CHEBI:37565"/>
        <label>2</label>
    </ligand>
</feature>
<feature type="binding site" evidence="1">
    <location>
        <begin position="234"/>
        <end position="238"/>
    </location>
    <ligand>
        <name>GTP</name>
        <dbReference type="ChEBI" id="CHEBI:37565"/>
        <label>2</label>
    </ligand>
</feature>
<feature type="binding site" evidence="1">
    <location>
        <begin position="300"/>
        <end position="303"/>
    </location>
    <ligand>
        <name>GTP</name>
        <dbReference type="ChEBI" id="CHEBI:37565"/>
        <label>2</label>
    </ligand>
</feature>
<proteinExistence type="inferred from homology"/>
<sequence>MATVLIVGKPNVGKSTLFNKLVRKKKAIVEDEEGVTRDPVQDTVEWYGKTFKLVDTCGVFDNPQDIISQKMKEVTLNMIREADLVLFVVDGKKGITKEDESLADFLRKSNVDTILVANKTENLREFEREVKPELYGLGFGEPIPVSAEHNVNLDVLVETIIRKLEEKGLDLESKPEITDAIKVAIVGRPNVGKSTLFNAILNKERALVSPIPGTTRDPVDEEVFIDGRKYVFVDTAGLRRKSRVEPRTVEKYSNYRVVDSIEKADVVVIVLDATQGITRQDQRIAGLVERRGRASVVVFNKWDLVEHREKRYDEFTKLFREKFYFVDYSPLIFISADKGWNIDKVIDAINLAYASYTTKVPSSAINSALQKVLAFTNLPRGLKIFFGLQVDIKPPTFLFFVNSIEKIKNPQKVFLRKLIRDYVFPFEGSPIFLKFKRSR</sequence>
<dbReference type="EMBL" id="CP000702">
    <property type="protein sequence ID" value="ABQ47362.1"/>
    <property type="molecule type" value="Genomic_DNA"/>
</dbReference>
<dbReference type="RefSeq" id="WP_011943821.1">
    <property type="nucleotide sequence ID" value="NC_009486.1"/>
</dbReference>
<dbReference type="SMR" id="A5IMD9"/>
<dbReference type="STRING" id="390874.Tpet_1348"/>
<dbReference type="KEGG" id="tpt:Tpet_1348"/>
<dbReference type="eggNOG" id="COG1160">
    <property type="taxonomic scope" value="Bacteria"/>
</dbReference>
<dbReference type="HOGENOM" id="CLU_016077_6_2_0"/>
<dbReference type="Proteomes" id="UP000006558">
    <property type="component" value="Chromosome"/>
</dbReference>
<dbReference type="GO" id="GO:0005525">
    <property type="term" value="F:GTP binding"/>
    <property type="evidence" value="ECO:0007669"/>
    <property type="project" value="UniProtKB-UniRule"/>
</dbReference>
<dbReference type="GO" id="GO:0043022">
    <property type="term" value="F:ribosome binding"/>
    <property type="evidence" value="ECO:0007669"/>
    <property type="project" value="TreeGrafter"/>
</dbReference>
<dbReference type="GO" id="GO:0042254">
    <property type="term" value="P:ribosome biogenesis"/>
    <property type="evidence" value="ECO:0007669"/>
    <property type="project" value="UniProtKB-KW"/>
</dbReference>
<dbReference type="CDD" id="cd01894">
    <property type="entry name" value="EngA1"/>
    <property type="match status" value="1"/>
</dbReference>
<dbReference type="CDD" id="cd01895">
    <property type="entry name" value="EngA2"/>
    <property type="match status" value="1"/>
</dbReference>
<dbReference type="FunFam" id="3.40.50.300:FF:000040">
    <property type="entry name" value="GTPase Der"/>
    <property type="match status" value="1"/>
</dbReference>
<dbReference type="FunFam" id="3.40.50.300:FF:000057">
    <property type="entry name" value="GTPase Der"/>
    <property type="match status" value="1"/>
</dbReference>
<dbReference type="Gene3D" id="3.30.300.20">
    <property type="match status" value="1"/>
</dbReference>
<dbReference type="Gene3D" id="3.40.50.300">
    <property type="entry name" value="P-loop containing nucleotide triphosphate hydrolases"/>
    <property type="match status" value="2"/>
</dbReference>
<dbReference type="HAMAP" id="MF_00195">
    <property type="entry name" value="GTPase_Der"/>
    <property type="match status" value="1"/>
</dbReference>
<dbReference type="InterPro" id="IPR031166">
    <property type="entry name" value="G_ENGA"/>
</dbReference>
<dbReference type="InterPro" id="IPR006073">
    <property type="entry name" value="GTP-bd"/>
</dbReference>
<dbReference type="InterPro" id="IPR016484">
    <property type="entry name" value="GTPase_Der"/>
</dbReference>
<dbReference type="InterPro" id="IPR032859">
    <property type="entry name" value="KH_dom-like"/>
</dbReference>
<dbReference type="InterPro" id="IPR015946">
    <property type="entry name" value="KH_dom-like_a/b"/>
</dbReference>
<dbReference type="InterPro" id="IPR027417">
    <property type="entry name" value="P-loop_NTPase"/>
</dbReference>
<dbReference type="InterPro" id="IPR005225">
    <property type="entry name" value="Small_GTP-bd"/>
</dbReference>
<dbReference type="NCBIfam" id="TIGR03594">
    <property type="entry name" value="GTPase_EngA"/>
    <property type="match status" value="1"/>
</dbReference>
<dbReference type="NCBIfam" id="TIGR00231">
    <property type="entry name" value="small_GTP"/>
    <property type="match status" value="2"/>
</dbReference>
<dbReference type="PANTHER" id="PTHR43834">
    <property type="entry name" value="GTPASE DER"/>
    <property type="match status" value="1"/>
</dbReference>
<dbReference type="PANTHER" id="PTHR43834:SF6">
    <property type="entry name" value="GTPASE DER"/>
    <property type="match status" value="1"/>
</dbReference>
<dbReference type="Pfam" id="PF14714">
    <property type="entry name" value="KH_dom-like"/>
    <property type="match status" value="1"/>
</dbReference>
<dbReference type="Pfam" id="PF01926">
    <property type="entry name" value="MMR_HSR1"/>
    <property type="match status" value="2"/>
</dbReference>
<dbReference type="PIRSF" id="PIRSF006485">
    <property type="entry name" value="GTP-binding_EngA"/>
    <property type="match status" value="1"/>
</dbReference>
<dbReference type="PRINTS" id="PR00326">
    <property type="entry name" value="GTP1OBG"/>
</dbReference>
<dbReference type="SUPFAM" id="SSF52540">
    <property type="entry name" value="P-loop containing nucleoside triphosphate hydrolases"/>
    <property type="match status" value="2"/>
</dbReference>
<dbReference type="PROSITE" id="PS51712">
    <property type="entry name" value="G_ENGA"/>
    <property type="match status" value="2"/>
</dbReference>
<protein>
    <recommendedName>
        <fullName evidence="1">GTPase Der</fullName>
    </recommendedName>
    <alternativeName>
        <fullName evidence="1">GTP-binding protein EngA</fullName>
    </alternativeName>
</protein>
<comment type="function">
    <text evidence="1">GTPase that plays an essential role in the late steps of ribosome biogenesis.</text>
</comment>
<comment type="subunit">
    <text evidence="1">Associates with the 50S ribosomal subunit.</text>
</comment>
<comment type="similarity">
    <text evidence="1">Belongs to the TRAFAC class TrmE-Era-EngA-EngB-Septin-like GTPase superfamily. EngA (Der) GTPase family.</text>
</comment>
<accession>A5IMD9</accession>